<feature type="chain" id="PRO_0000171307" description="tRNA (guanine-N(7)-)-methyltransferase">
    <location>
        <begin position="1"/>
        <end position="239"/>
    </location>
</feature>
<feature type="active site" evidence="1">
    <location>
        <position position="144"/>
    </location>
</feature>
<feature type="binding site" evidence="2">
    <location>
        <position position="69"/>
    </location>
    <ligand>
        <name>S-adenosyl-L-methionine</name>
        <dbReference type="ChEBI" id="CHEBI:59789"/>
    </ligand>
</feature>
<feature type="binding site" evidence="2">
    <location>
        <position position="94"/>
    </location>
    <ligand>
        <name>S-adenosyl-L-methionine</name>
        <dbReference type="ChEBI" id="CHEBI:59789"/>
    </ligand>
</feature>
<feature type="binding site" evidence="2">
    <location>
        <position position="121"/>
    </location>
    <ligand>
        <name>S-adenosyl-L-methionine</name>
        <dbReference type="ChEBI" id="CHEBI:59789"/>
    </ligand>
</feature>
<feature type="binding site" evidence="2">
    <location>
        <position position="144"/>
    </location>
    <ligand>
        <name>S-adenosyl-L-methionine</name>
        <dbReference type="ChEBI" id="CHEBI:59789"/>
    </ligand>
</feature>
<feature type="binding site" evidence="2">
    <location>
        <position position="148"/>
    </location>
    <ligand>
        <name>substrate</name>
    </ligand>
</feature>
<feature type="binding site" evidence="2">
    <location>
        <position position="180"/>
    </location>
    <ligand>
        <name>substrate</name>
    </ligand>
</feature>
<feature type="binding site" evidence="2">
    <location>
        <begin position="217"/>
        <end position="220"/>
    </location>
    <ligand>
        <name>substrate</name>
    </ligand>
</feature>
<keyword id="KW-0489">Methyltransferase</keyword>
<keyword id="KW-1185">Reference proteome</keyword>
<keyword id="KW-0949">S-adenosyl-L-methionine</keyword>
<keyword id="KW-0808">Transferase</keyword>
<keyword id="KW-0819">tRNA processing</keyword>
<comment type="function">
    <text evidence="2">Catalyzes the formation of N(7)-methylguanine at position 46 (m7G46) in tRNA.</text>
</comment>
<comment type="catalytic activity">
    <reaction evidence="2">
        <text>guanosine(46) in tRNA + S-adenosyl-L-methionine = N(7)-methylguanosine(46) in tRNA + S-adenosyl-L-homocysteine</text>
        <dbReference type="Rhea" id="RHEA:42708"/>
        <dbReference type="Rhea" id="RHEA-COMP:10188"/>
        <dbReference type="Rhea" id="RHEA-COMP:10189"/>
        <dbReference type="ChEBI" id="CHEBI:57856"/>
        <dbReference type="ChEBI" id="CHEBI:59789"/>
        <dbReference type="ChEBI" id="CHEBI:74269"/>
        <dbReference type="ChEBI" id="CHEBI:74480"/>
        <dbReference type="EC" id="2.1.1.33"/>
    </reaction>
</comment>
<comment type="pathway">
    <text evidence="2">tRNA modification; N(7)-methylguanine-tRNA biosynthesis.</text>
</comment>
<comment type="subunit">
    <text evidence="2">Monomer.</text>
</comment>
<comment type="similarity">
    <text evidence="2">Belongs to the class I-like SAM-binding methyltransferase superfamily. TrmB family.</text>
</comment>
<reference key="1">
    <citation type="journal article" date="2000" name="Nature">
        <title>Genome sequence of the endocellular bacterial symbiont of aphids Buchnera sp. APS.</title>
        <authorList>
            <person name="Shigenobu S."/>
            <person name="Watanabe H."/>
            <person name="Hattori M."/>
            <person name="Sakaki Y."/>
            <person name="Ishikawa H."/>
        </authorList>
    </citation>
    <scope>NUCLEOTIDE SEQUENCE [LARGE SCALE GENOMIC DNA]</scope>
    <source>
        <strain>APS</strain>
    </source>
</reference>
<dbReference type="EC" id="2.1.1.33" evidence="2"/>
<dbReference type="EMBL" id="BA000003">
    <property type="protein sequence ID" value="BAB13243.1"/>
    <property type="molecule type" value="Genomic_DNA"/>
</dbReference>
<dbReference type="RefSeq" id="NP_240357.1">
    <property type="nucleotide sequence ID" value="NC_002528.1"/>
</dbReference>
<dbReference type="RefSeq" id="WP_009874501.1">
    <property type="nucleotide sequence ID" value="NC_002528.1"/>
</dbReference>
<dbReference type="SMR" id="P57616"/>
<dbReference type="STRING" id="563178.BUAP5A_544"/>
<dbReference type="EnsemblBacteria" id="BAB13243">
    <property type="protein sequence ID" value="BAB13243"/>
    <property type="gene ID" value="BAB13243"/>
</dbReference>
<dbReference type="KEGG" id="buc:BU551"/>
<dbReference type="PATRIC" id="fig|107806.10.peg.555"/>
<dbReference type="eggNOG" id="COG0220">
    <property type="taxonomic scope" value="Bacteria"/>
</dbReference>
<dbReference type="HOGENOM" id="CLU_050910_0_1_6"/>
<dbReference type="UniPathway" id="UPA00989"/>
<dbReference type="Proteomes" id="UP000001806">
    <property type="component" value="Chromosome"/>
</dbReference>
<dbReference type="GO" id="GO:0043527">
    <property type="term" value="C:tRNA methyltransferase complex"/>
    <property type="evidence" value="ECO:0007669"/>
    <property type="project" value="TreeGrafter"/>
</dbReference>
<dbReference type="GO" id="GO:0008176">
    <property type="term" value="F:tRNA (guanine(46)-N7)-methyltransferase activity"/>
    <property type="evidence" value="ECO:0007669"/>
    <property type="project" value="UniProtKB-UniRule"/>
</dbReference>
<dbReference type="Gene3D" id="3.40.50.150">
    <property type="entry name" value="Vaccinia Virus protein VP39"/>
    <property type="match status" value="1"/>
</dbReference>
<dbReference type="HAMAP" id="MF_01057">
    <property type="entry name" value="tRNA_methyltr_TrmB"/>
    <property type="match status" value="1"/>
</dbReference>
<dbReference type="InterPro" id="IPR029063">
    <property type="entry name" value="SAM-dependent_MTases_sf"/>
</dbReference>
<dbReference type="InterPro" id="IPR003358">
    <property type="entry name" value="tRNA_(Gua-N-7)_MeTrfase_Trmb"/>
</dbReference>
<dbReference type="InterPro" id="IPR055361">
    <property type="entry name" value="tRNA_methyltr_TrmB_bact"/>
</dbReference>
<dbReference type="NCBIfam" id="TIGR00091">
    <property type="entry name" value="tRNA (guanosine(46)-N7)-methyltransferase TrmB"/>
    <property type="match status" value="1"/>
</dbReference>
<dbReference type="PANTHER" id="PTHR23417">
    <property type="entry name" value="3-DEOXY-D-MANNO-OCTULOSONIC-ACID TRANSFERASE/TRNA GUANINE-N 7 - -METHYLTRANSFERASE"/>
    <property type="match status" value="1"/>
</dbReference>
<dbReference type="PANTHER" id="PTHR23417:SF14">
    <property type="entry name" value="PENTACOTRIPEPTIDE-REPEAT REGION OF PRORP DOMAIN-CONTAINING PROTEIN"/>
    <property type="match status" value="1"/>
</dbReference>
<dbReference type="Pfam" id="PF02390">
    <property type="entry name" value="Methyltransf_4"/>
    <property type="match status" value="1"/>
</dbReference>
<dbReference type="SUPFAM" id="SSF53335">
    <property type="entry name" value="S-adenosyl-L-methionine-dependent methyltransferases"/>
    <property type="match status" value="1"/>
</dbReference>
<dbReference type="PROSITE" id="PS51625">
    <property type="entry name" value="SAM_MT_TRMB"/>
    <property type="match status" value="1"/>
</dbReference>
<evidence type="ECO:0000250" key="1"/>
<evidence type="ECO:0000255" key="2">
    <source>
        <dbReference type="HAMAP-Rule" id="MF_01057"/>
    </source>
</evidence>
<sequence length="239" mass="27935">MKNNIITPRYNLEGVFLRQIHSFVCRKGRTTTSQLSAIKKYWSLIGVDFQLNALNFSSIFKHRAPIILEIGFGSGESLVKTAMNFPEKNFLGIEVYKSGIGSCLHYASSYQIQNLRIIYYDATEVMYNMIPDDTLSKVQIFFPDPWHKKRHHKRRLLKNIFLKIITKKLIIDGILHIATDSESYAFYILDEIKDIKNYKNLSEKNNFVKRPVSRIITKFEKKGLLQGKKIFDLMFQLKK</sequence>
<proteinExistence type="inferred from homology"/>
<protein>
    <recommendedName>
        <fullName evidence="2">tRNA (guanine-N(7)-)-methyltransferase</fullName>
        <ecNumber evidence="2">2.1.1.33</ecNumber>
    </recommendedName>
    <alternativeName>
        <fullName evidence="2">tRNA (guanine(46)-N(7))-methyltransferase</fullName>
    </alternativeName>
    <alternativeName>
        <fullName evidence="2">tRNA(m7G46)-methyltransferase</fullName>
    </alternativeName>
</protein>
<name>TRMB_BUCAI</name>
<gene>
    <name evidence="2" type="primary">trmB</name>
    <name type="ordered locus">BU551</name>
</gene>
<accession>P57616</accession>
<organism>
    <name type="scientific">Buchnera aphidicola subsp. Acyrthosiphon pisum (strain APS)</name>
    <name type="common">Acyrthosiphon pisum symbiotic bacterium</name>
    <dbReference type="NCBI Taxonomy" id="107806"/>
    <lineage>
        <taxon>Bacteria</taxon>
        <taxon>Pseudomonadati</taxon>
        <taxon>Pseudomonadota</taxon>
        <taxon>Gammaproteobacteria</taxon>
        <taxon>Enterobacterales</taxon>
        <taxon>Erwiniaceae</taxon>
        <taxon>Buchnera</taxon>
    </lineage>
</organism>